<gene>
    <name evidence="5 9" type="primary">Hez</name>
    <name evidence="6" type="synonym">Lsm12b</name>
    <name evidence="9" type="ORF">CG14164</name>
</gene>
<keyword id="KW-1185">Reference proteome</keyword>
<sequence>MSSLAPCFTVGSIVRCKTCFGDNISGEVVAFDLGVKMLIMKCPSSNGGGDEQTTCNVTIVNLSLCMDIEIVKEAIPPAEVQQPEPIDLPMIRERYRYATEHRTLSCRSYHPNASPFGQALFRLLVKRFGDPAIIWQNKGDQVAINILRQVVIDAPYATENIRYLDWNPKLAICVQEVVQNFCSKQF</sequence>
<organism evidence="10">
    <name type="scientific">Drosophila melanogaster</name>
    <name type="common">Fruit fly</name>
    <dbReference type="NCBI Taxonomy" id="7227"/>
    <lineage>
        <taxon>Eukaryota</taxon>
        <taxon>Metazoa</taxon>
        <taxon>Ecdysozoa</taxon>
        <taxon>Arthropoda</taxon>
        <taxon>Hexapoda</taxon>
        <taxon>Insecta</taxon>
        <taxon>Pterygota</taxon>
        <taxon>Neoptera</taxon>
        <taxon>Endopterygota</taxon>
        <taxon>Diptera</taxon>
        <taxon>Brachycera</taxon>
        <taxon>Muscomorpha</taxon>
        <taxon>Ephydroidea</taxon>
        <taxon>Drosophilidae</taxon>
        <taxon>Drosophila</taxon>
        <taxon>Sophophora</taxon>
    </lineage>
</organism>
<protein>
    <recommendedName>
        <fullName evidence="6">LSM12 homolog B</fullName>
    </recommendedName>
    <alternativeName>
        <fullName evidence="5 9">Protein Hezron</fullName>
    </alternativeName>
</protein>
<feature type="chain" id="PRO_0000305135" description="LSM12 homolog B">
    <location>
        <begin position="1"/>
        <end position="186"/>
    </location>
</feature>
<feature type="domain" description="Sm" evidence="2">
    <location>
        <begin position="1"/>
        <end position="74"/>
    </location>
</feature>
<feature type="domain" description="AD" evidence="1">
    <location>
        <begin position="84"/>
        <end position="186"/>
    </location>
</feature>
<feature type="sequence conflict" description="In Ref. 3; AAY55005." evidence="7" ref="3">
    <location>
        <position position="36"/>
    </location>
</feature>
<feature type="sequence conflict" description="In Ref. 3; AAY55005/AAY54970." evidence="7" ref="3">
    <original>E</original>
    <variation>G</variation>
    <location>
        <position position="176"/>
    </location>
</feature>
<reference key="1">
    <citation type="journal article" date="2000" name="Science">
        <title>The genome sequence of Drosophila melanogaster.</title>
        <authorList>
            <person name="Adams M.D."/>
            <person name="Celniker S.E."/>
            <person name="Holt R.A."/>
            <person name="Evans C.A."/>
            <person name="Gocayne J.D."/>
            <person name="Amanatides P.G."/>
            <person name="Scherer S.E."/>
            <person name="Li P.W."/>
            <person name="Hoskins R.A."/>
            <person name="Galle R.F."/>
            <person name="George R.A."/>
            <person name="Lewis S.E."/>
            <person name="Richards S."/>
            <person name="Ashburner M."/>
            <person name="Henderson S.N."/>
            <person name="Sutton G.G."/>
            <person name="Wortman J.R."/>
            <person name="Yandell M.D."/>
            <person name="Zhang Q."/>
            <person name="Chen L.X."/>
            <person name="Brandon R.C."/>
            <person name="Rogers Y.-H.C."/>
            <person name="Blazej R.G."/>
            <person name="Champe M."/>
            <person name="Pfeiffer B.D."/>
            <person name="Wan K.H."/>
            <person name="Doyle C."/>
            <person name="Baxter E.G."/>
            <person name="Helt G."/>
            <person name="Nelson C.R."/>
            <person name="Miklos G.L.G."/>
            <person name="Abril J.F."/>
            <person name="Agbayani A."/>
            <person name="An H.-J."/>
            <person name="Andrews-Pfannkoch C."/>
            <person name="Baldwin D."/>
            <person name="Ballew R.M."/>
            <person name="Basu A."/>
            <person name="Baxendale J."/>
            <person name="Bayraktaroglu L."/>
            <person name="Beasley E.M."/>
            <person name="Beeson K.Y."/>
            <person name="Benos P.V."/>
            <person name="Berman B.P."/>
            <person name="Bhandari D."/>
            <person name="Bolshakov S."/>
            <person name="Borkova D."/>
            <person name="Botchan M.R."/>
            <person name="Bouck J."/>
            <person name="Brokstein P."/>
            <person name="Brottier P."/>
            <person name="Burtis K.C."/>
            <person name="Busam D.A."/>
            <person name="Butler H."/>
            <person name="Cadieu E."/>
            <person name="Center A."/>
            <person name="Chandra I."/>
            <person name="Cherry J.M."/>
            <person name="Cawley S."/>
            <person name="Dahlke C."/>
            <person name="Davenport L.B."/>
            <person name="Davies P."/>
            <person name="de Pablos B."/>
            <person name="Delcher A."/>
            <person name="Deng Z."/>
            <person name="Mays A.D."/>
            <person name="Dew I."/>
            <person name="Dietz S.M."/>
            <person name="Dodson K."/>
            <person name="Doup L.E."/>
            <person name="Downes M."/>
            <person name="Dugan-Rocha S."/>
            <person name="Dunkov B.C."/>
            <person name="Dunn P."/>
            <person name="Durbin K.J."/>
            <person name="Evangelista C.C."/>
            <person name="Ferraz C."/>
            <person name="Ferriera S."/>
            <person name="Fleischmann W."/>
            <person name="Fosler C."/>
            <person name="Gabrielian A.E."/>
            <person name="Garg N.S."/>
            <person name="Gelbart W.M."/>
            <person name="Glasser K."/>
            <person name="Glodek A."/>
            <person name="Gong F."/>
            <person name="Gorrell J.H."/>
            <person name="Gu Z."/>
            <person name="Guan P."/>
            <person name="Harris M."/>
            <person name="Harris N.L."/>
            <person name="Harvey D.A."/>
            <person name="Heiman T.J."/>
            <person name="Hernandez J.R."/>
            <person name="Houck J."/>
            <person name="Hostin D."/>
            <person name="Houston K.A."/>
            <person name="Howland T.J."/>
            <person name="Wei M.-H."/>
            <person name="Ibegwam C."/>
            <person name="Jalali M."/>
            <person name="Kalush F."/>
            <person name="Karpen G.H."/>
            <person name="Ke Z."/>
            <person name="Kennison J.A."/>
            <person name="Ketchum K.A."/>
            <person name="Kimmel B.E."/>
            <person name="Kodira C.D."/>
            <person name="Kraft C.L."/>
            <person name="Kravitz S."/>
            <person name="Kulp D."/>
            <person name="Lai Z."/>
            <person name="Lasko P."/>
            <person name="Lei Y."/>
            <person name="Levitsky A.A."/>
            <person name="Li J.H."/>
            <person name="Li Z."/>
            <person name="Liang Y."/>
            <person name="Lin X."/>
            <person name="Liu X."/>
            <person name="Mattei B."/>
            <person name="McIntosh T.C."/>
            <person name="McLeod M.P."/>
            <person name="McPherson D."/>
            <person name="Merkulov G."/>
            <person name="Milshina N.V."/>
            <person name="Mobarry C."/>
            <person name="Morris J."/>
            <person name="Moshrefi A."/>
            <person name="Mount S.M."/>
            <person name="Moy M."/>
            <person name="Murphy B."/>
            <person name="Murphy L."/>
            <person name="Muzny D.M."/>
            <person name="Nelson D.L."/>
            <person name="Nelson D.R."/>
            <person name="Nelson K.A."/>
            <person name="Nixon K."/>
            <person name="Nusskern D.R."/>
            <person name="Pacleb J.M."/>
            <person name="Palazzolo M."/>
            <person name="Pittman G.S."/>
            <person name="Pan S."/>
            <person name="Pollard J."/>
            <person name="Puri V."/>
            <person name="Reese M.G."/>
            <person name="Reinert K."/>
            <person name="Remington K."/>
            <person name="Saunders R.D.C."/>
            <person name="Scheeler F."/>
            <person name="Shen H."/>
            <person name="Shue B.C."/>
            <person name="Siden-Kiamos I."/>
            <person name="Simpson M."/>
            <person name="Skupski M.P."/>
            <person name="Smith T.J."/>
            <person name="Spier E."/>
            <person name="Spradling A.C."/>
            <person name="Stapleton M."/>
            <person name="Strong R."/>
            <person name="Sun E."/>
            <person name="Svirskas R."/>
            <person name="Tector C."/>
            <person name="Turner R."/>
            <person name="Venter E."/>
            <person name="Wang A.H."/>
            <person name="Wang X."/>
            <person name="Wang Z.-Y."/>
            <person name="Wassarman D.A."/>
            <person name="Weinstock G.M."/>
            <person name="Weissenbach J."/>
            <person name="Williams S.M."/>
            <person name="Woodage T."/>
            <person name="Worley K.C."/>
            <person name="Wu D."/>
            <person name="Yang S."/>
            <person name="Yao Q.A."/>
            <person name="Ye J."/>
            <person name="Yeh R.-F."/>
            <person name="Zaveri J.S."/>
            <person name="Zhan M."/>
            <person name="Zhang G."/>
            <person name="Zhao Q."/>
            <person name="Zheng L."/>
            <person name="Zheng X.H."/>
            <person name="Zhong F.N."/>
            <person name="Zhong W."/>
            <person name="Zhou X."/>
            <person name="Zhu S.C."/>
            <person name="Zhu X."/>
            <person name="Smith H.O."/>
            <person name="Gibbs R.A."/>
            <person name="Myers E.W."/>
            <person name="Rubin G.M."/>
            <person name="Venter J.C."/>
        </authorList>
    </citation>
    <scope>NUCLEOTIDE SEQUENCE [LARGE SCALE GENOMIC DNA]</scope>
    <source>
        <strain>Berkeley</strain>
    </source>
</reference>
<reference key="2">
    <citation type="journal article" date="2002" name="Genome Biol.">
        <title>Annotation of the Drosophila melanogaster euchromatic genome: a systematic review.</title>
        <authorList>
            <person name="Misra S."/>
            <person name="Crosby M.A."/>
            <person name="Mungall C.J."/>
            <person name="Matthews B.B."/>
            <person name="Campbell K.S."/>
            <person name="Hradecky P."/>
            <person name="Huang Y."/>
            <person name="Kaminker J.S."/>
            <person name="Millburn G.H."/>
            <person name="Prochnik S.E."/>
            <person name="Smith C.D."/>
            <person name="Tupy J.L."/>
            <person name="Whitfield E.J."/>
            <person name="Bayraktaroglu L."/>
            <person name="Berman B.P."/>
            <person name="Bettencourt B.R."/>
            <person name="Celniker S.E."/>
            <person name="de Grey A.D.N.J."/>
            <person name="Drysdale R.A."/>
            <person name="Harris N.L."/>
            <person name="Richter J."/>
            <person name="Russo S."/>
            <person name="Schroeder A.J."/>
            <person name="Shu S.Q."/>
            <person name="Stapleton M."/>
            <person name="Yamada C."/>
            <person name="Ashburner M."/>
            <person name="Gelbart W.M."/>
            <person name="Rubin G.M."/>
            <person name="Lewis S.E."/>
        </authorList>
    </citation>
    <scope>GENOME REANNOTATION</scope>
    <source>
        <strain>Berkeley</strain>
    </source>
</reference>
<reference key="3">
    <citation type="submission" date="2005-05" db="EMBL/GenBank/DDBJ databases">
        <authorList>
            <person name="Stapleton M."/>
            <person name="Carlson J.W."/>
            <person name="Chavez C."/>
            <person name="Frise E."/>
            <person name="George R.A."/>
            <person name="Pacleb J.M."/>
            <person name="Park S."/>
            <person name="Wan K.H."/>
            <person name="Yu C."/>
            <person name="Celniker S.E."/>
        </authorList>
    </citation>
    <scope>NUCLEOTIDE SEQUENCE [LARGE SCALE MRNA] OF 24-186</scope>
    <source>
        <strain>Berkeley</strain>
    </source>
</reference>
<reference key="4">
    <citation type="journal article" date="2017" name="FEBS Lett.">
        <title>Novel interactors of the Drosophila Survival Motor Neuron (SMN) Complex suggest its full conservation.</title>
        <authorList>
            <person name="Lanfranco M."/>
            <person name="Cacciottolo R."/>
            <person name="Borg R.M."/>
            <person name="Vassallo N."/>
            <person name="Juge F."/>
            <person name="Bordonne R."/>
            <person name="Cauchi R.J."/>
        </authorList>
    </citation>
    <scope>FUNCTION</scope>
    <scope>NOMENCLATURE</scope>
    <scope>INTERACTION WITH SBAT</scope>
</reference>
<reference key="5">
    <citation type="journal article" date="2019" name="G3 (Bethesda)">
        <title>Composition of the Survival Motor Neuron (SMN) Complex in Drosophila melanogaster.</title>
        <authorList>
            <person name="Matera A.G."/>
            <person name="Raimer A.C."/>
            <person name="Schmidt C.A."/>
            <person name="Kelly J.A."/>
            <person name="Droby G.N."/>
            <person name="Baillat D."/>
            <person name="Ten Have S."/>
            <person name="Lamond A.I."/>
            <person name="Wagner E.J."/>
            <person name="Gray K.M."/>
        </authorList>
    </citation>
    <scope>FUNCTION</scope>
    <scope>SIMILARITY WITH LSM12</scope>
    <scope>NOMENCLATURE</scope>
</reference>
<dbReference type="EMBL" id="AE014296">
    <property type="protein sequence ID" value="AAF50187.1"/>
    <property type="molecule type" value="Genomic_DNA"/>
</dbReference>
<dbReference type="EMBL" id="AE014296">
    <property type="protein sequence ID" value="ABW08509.1"/>
    <property type="molecule type" value="Genomic_DNA"/>
</dbReference>
<dbReference type="EMBL" id="BT022530">
    <property type="status" value="NOT_ANNOTATED_CDS"/>
    <property type="molecule type" value="mRNA"/>
</dbReference>
<dbReference type="EMBL" id="BT022554">
    <property type="protein sequence ID" value="AAY54970.1"/>
    <property type="status" value="ALT_FRAME"/>
    <property type="molecule type" value="mRNA"/>
</dbReference>
<dbReference type="EMBL" id="BT022589">
    <property type="protein sequence ID" value="AAY55005.1"/>
    <property type="molecule type" value="mRNA"/>
</dbReference>
<dbReference type="RefSeq" id="NP_001097566.1">
    <property type="nucleotide sequence ID" value="NM_001104096.2"/>
</dbReference>
<dbReference type="RefSeq" id="NP_648371.1">
    <property type="nucleotide sequence ID" value="NM_140114.3"/>
</dbReference>
<dbReference type="BioGRID" id="64554">
    <property type="interactions" value="3"/>
</dbReference>
<dbReference type="IntAct" id="Q9VT67">
    <property type="interactions" value="3"/>
</dbReference>
<dbReference type="STRING" id="7227.FBpp0112070"/>
<dbReference type="PaxDb" id="7227-FBpp0112070"/>
<dbReference type="EnsemblMetazoa" id="FBtr0076359">
    <property type="protein sequence ID" value="FBpp0076088"/>
    <property type="gene ID" value="FBgn0036057"/>
</dbReference>
<dbReference type="EnsemblMetazoa" id="FBtr0113157">
    <property type="protein sequence ID" value="FBpp0112070"/>
    <property type="gene ID" value="FBgn0036057"/>
</dbReference>
<dbReference type="GeneID" id="39167"/>
<dbReference type="KEGG" id="dme:Dmel_CG14164"/>
<dbReference type="UCSC" id="CG14164-RA">
    <property type="organism name" value="d. melanogaster"/>
</dbReference>
<dbReference type="UCSC" id="CG14164-RB">
    <property type="organism name" value="d. melanogaster"/>
</dbReference>
<dbReference type="AGR" id="FB:FBgn0036057"/>
<dbReference type="CTD" id="39167"/>
<dbReference type="FlyBase" id="FBgn0036057">
    <property type="gene designation" value="Hez"/>
</dbReference>
<dbReference type="VEuPathDB" id="VectorBase:FBgn0036057"/>
<dbReference type="eggNOG" id="KOG4401">
    <property type="taxonomic scope" value="Eukaryota"/>
</dbReference>
<dbReference type="GeneTree" id="ENSGT00390000006956"/>
<dbReference type="HOGENOM" id="CLU_073383_2_0_1"/>
<dbReference type="InParanoid" id="Q9VT67"/>
<dbReference type="OMA" id="FNPFPIG"/>
<dbReference type="OrthoDB" id="1057137at2759"/>
<dbReference type="PhylomeDB" id="Q9VT67"/>
<dbReference type="BioGRID-ORCS" id="39167">
    <property type="hits" value="0 hits in 1 CRISPR screen"/>
</dbReference>
<dbReference type="GenomeRNAi" id="39167"/>
<dbReference type="PRO" id="PR:Q9VT67"/>
<dbReference type="Proteomes" id="UP000000803">
    <property type="component" value="Chromosome 3L"/>
</dbReference>
<dbReference type="Bgee" id="FBgn0036057">
    <property type="expression patterns" value="Expressed in saliva-secreting gland and 10 other cell types or tissues"/>
</dbReference>
<dbReference type="GO" id="GO:0003723">
    <property type="term" value="F:RNA binding"/>
    <property type="evidence" value="ECO:0007669"/>
    <property type="project" value="InterPro"/>
</dbReference>
<dbReference type="CDD" id="cd01735">
    <property type="entry name" value="LSm12_N"/>
    <property type="match status" value="1"/>
</dbReference>
<dbReference type="InterPro" id="IPR047574">
    <property type="entry name" value="AD"/>
</dbReference>
<dbReference type="InterPro" id="IPR039683">
    <property type="entry name" value="Lsm12-like"/>
</dbReference>
<dbReference type="InterPro" id="IPR019181">
    <property type="entry name" value="LSM12_ABD"/>
</dbReference>
<dbReference type="InterPro" id="IPR048478">
    <property type="entry name" value="LSM12_LSM"/>
</dbReference>
<dbReference type="InterPro" id="IPR047575">
    <property type="entry name" value="Sm"/>
</dbReference>
<dbReference type="PANTHER" id="PTHR13542">
    <property type="entry name" value="LSM12 HOMOLOG"/>
    <property type="match status" value="1"/>
</dbReference>
<dbReference type="Pfam" id="PF09793">
    <property type="entry name" value="AD"/>
    <property type="match status" value="1"/>
</dbReference>
<dbReference type="Pfam" id="PF21166">
    <property type="entry name" value="LSM12_LSM"/>
    <property type="match status" value="1"/>
</dbReference>
<dbReference type="SMART" id="SM00995">
    <property type="entry name" value="AD"/>
    <property type="match status" value="1"/>
</dbReference>
<dbReference type="PROSITE" id="PS52001">
    <property type="entry name" value="AD"/>
    <property type="match status" value="1"/>
</dbReference>
<dbReference type="PROSITE" id="PS52002">
    <property type="entry name" value="SM"/>
    <property type="match status" value="1"/>
</dbReference>
<comment type="function">
    <text evidence="3 4">May have an accessory function in the survival motor neuron (SMN) complex.</text>
</comment>
<comment type="subunit">
    <text evidence="3">Interacts with Sbat; along with Sbat and Vlet, may form an accessory subcomplex involved in SMN complex function.</text>
</comment>
<comment type="miscellaneous">
    <text evidence="5">When it was originally identified as the potential ortholog of GEMIN6 this protein was named 'Hezron' after the 6th generation descendent of Abraham (PubMed:28949413). This protein is produced by a bicistronic gene which also produces the CG6709 protein from a non-overlapping reading frame.</text>
</comment>
<comment type="similarity">
    <text evidence="8">Belongs to the LSM12 family.</text>
</comment>
<comment type="caution">
    <text evidence="3 4 8">Hez, Sbat and Vlet were originally identified as orthologs of GEMIN6, GEMIN7 and GEMIN8 respectively, which in other organisms forms an accessory subcomplex of the SMN complex (PubMed:28949413). They were subsequently shown to be more closely related to LSM12, NAA38 and COMMD10 (PubMed:30563832). No GEMIN6, GEMIN7 or GEMIN8 orthologs have been identified in Dipteran organisms but it is possible that Hez, Sbat and Vlet have been co-opted to fulfill some of their function in the SMN complex.</text>
</comment>
<comment type="sequence caution" evidence="7">
    <conflict type="frameshift">
        <sequence resource="EMBL-CDS" id="AAY54970"/>
    </conflict>
</comment>
<proteinExistence type="evidence at protein level"/>
<evidence type="ECO:0000255" key="1">
    <source>
        <dbReference type="PROSITE-ProRule" id="PRU01345"/>
    </source>
</evidence>
<evidence type="ECO:0000255" key="2">
    <source>
        <dbReference type="PROSITE-ProRule" id="PRU01346"/>
    </source>
</evidence>
<evidence type="ECO:0000269" key="3">
    <source>
    </source>
</evidence>
<evidence type="ECO:0000269" key="4">
    <source>
    </source>
</evidence>
<evidence type="ECO:0000303" key="5">
    <source>
    </source>
</evidence>
<evidence type="ECO:0000303" key="6">
    <source>
    </source>
</evidence>
<evidence type="ECO:0000305" key="7"/>
<evidence type="ECO:0000305" key="8">
    <source>
    </source>
</evidence>
<evidence type="ECO:0000312" key="9">
    <source>
        <dbReference type="FlyBase" id="FBgn0036057"/>
    </source>
</evidence>
<evidence type="ECO:0000312" key="10">
    <source>
        <dbReference type="Proteomes" id="UP000000803"/>
    </source>
</evidence>
<accession>Q9VT67</accession>
<accession>A8JNP9</accession>
<accession>Q4V5R7</accession>
<accession>Q4V5V2</accession>
<accession>Q4V5X6</accession>
<name>HEZ_DROME</name>